<accession>B2SZR6</accession>
<proteinExistence type="inferred from homology"/>
<name>GLMM_PARPJ</name>
<protein>
    <recommendedName>
        <fullName evidence="1">Phosphoglucosamine mutase</fullName>
        <ecNumber evidence="1">5.4.2.10</ecNumber>
    </recommendedName>
</protein>
<dbReference type="EC" id="5.4.2.10" evidence="1"/>
<dbReference type="EMBL" id="CP001052">
    <property type="protein sequence ID" value="ACD17254.1"/>
    <property type="molecule type" value="Genomic_DNA"/>
</dbReference>
<dbReference type="RefSeq" id="WP_012433840.1">
    <property type="nucleotide sequence ID" value="NC_010681.1"/>
</dbReference>
<dbReference type="SMR" id="B2SZR6"/>
<dbReference type="STRING" id="398527.Bphyt_2860"/>
<dbReference type="KEGG" id="bpy:Bphyt_2860"/>
<dbReference type="eggNOG" id="COG1109">
    <property type="taxonomic scope" value="Bacteria"/>
</dbReference>
<dbReference type="HOGENOM" id="CLU_016950_7_0_4"/>
<dbReference type="OrthoDB" id="9803322at2"/>
<dbReference type="Proteomes" id="UP000001739">
    <property type="component" value="Chromosome 1"/>
</dbReference>
<dbReference type="GO" id="GO:0005829">
    <property type="term" value="C:cytosol"/>
    <property type="evidence" value="ECO:0007669"/>
    <property type="project" value="TreeGrafter"/>
</dbReference>
<dbReference type="GO" id="GO:0000287">
    <property type="term" value="F:magnesium ion binding"/>
    <property type="evidence" value="ECO:0007669"/>
    <property type="project" value="UniProtKB-UniRule"/>
</dbReference>
<dbReference type="GO" id="GO:0008966">
    <property type="term" value="F:phosphoglucosamine mutase activity"/>
    <property type="evidence" value="ECO:0007669"/>
    <property type="project" value="UniProtKB-UniRule"/>
</dbReference>
<dbReference type="GO" id="GO:0004615">
    <property type="term" value="F:phosphomannomutase activity"/>
    <property type="evidence" value="ECO:0007669"/>
    <property type="project" value="TreeGrafter"/>
</dbReference>
<dbReference type="GO" id="GO:0005975">
    <property type="term" value="P:carbohydrate metabolic process"/>
    <property type="evidence" value="ECO:0007669"/>
    <property type="project" value="InterPro"/>
</dbReference>
<dbReference type="GO" id="GO:0009252">
    <property type="term" value="P:peptidoglycan biosynthetic process"/>
    <property type="evidence" value="ECO:0007669"/>
    <property type="project" value="TreeGrafter"/>
</dbReference>
<dbReference type="GO" id="GO:0006048">
    <property type="term" value="P:UDP-N-acetylglucosamine biosynthetic process"/>
    <property type="evidence" value="ECO:0007669"/>
    <property type="project" value="TreeGrafter"/>
</dbReference>
<dbReference type="CDD" id="cd05802">
    <property type="entry name" value="GlmM"/>
    <property type="match status" value="1"/>
</dbReference>
<dbReference type="FunFam" id="3.30.310.50:FF:000001">
    <property type="entry name" value="Phosphoglucosamine mutase"/>
    <property type="match status" value="1"/>
</dbReference>
<dbReference type="FunFam" id="3.40.120.10:FF:000001">
    <property type="entry name" value="Phosphoglucosamine mutase"/>
    <property type="match status" value="1"/>
</dbReference>
<dbReference type="FunFam" id="3.40.120.10:FF:000003">
    <property type="entry name" value="Phosphoglucosamine mutase"/>
    <property type="match status" value="1"/>
</dbReference>
<dbReference type="Gene3D" id="3.40.120.10">
    <property type="entry name" value="Alpha-D-Glucose-1,6-Bisphosphate, subunit A, domain 3"/>
    <property type="match status" value="3"/>
</dbReference>
<dbReference type="Gene3D" id="3.30.310.50">
    <property type="entry name" value="Alpha-D-phosphohexomutase, C-terminal domain"/>
    <property type="match status" value="1"/>
</dbReference>
<dbReference type="HAMAP" id="MF_01554_B">
    <property type="entry name" value="GlmM_B"/>
    <property type="match status" value="1"/>
</dbReference>
<dbReference type="InterPro" id="IPR005844">
    <property type="entry name" value="A-D-PHexomutase_a/b/a-I"/>
</dbReference>
<dbReference type="InterPro" id="IPR016055">
    <property type="entry name" value="A-D-PHexomutase_a/b/a-I/II/III"/>
</dbReference>
<dbReference type="InterPro" id="IPR005845">
    <property type="entry name" value="A-D-PHexomutase_a/b/a-II"/>
</dbReference>
<dbReference type="InterPro" id="IPR005846">
    <property type="entry name" value="A-D-PHexomutase_a/b/a-III"/>
</dbReference>
<dbReference type="InterPro" id="IPR005843">
    <property type="entry name" value="A-D-PHexomutase_C"/>
</dbReference>
<dbReference type="InterPro" id="IPR036900">
    <property type="entry name" value="A-D-PHexomutase_C_sf"/>
</dbReference>
<dbReference type="InterPro" id="IPR016066">
    <property type="entry name" value="A-D-PHexomutase_CS"/>
</dbReference>
<dbReference type="InterPro" id="IPR005841">
    <property type="entry name" value="Alpha-D-phosphohexomutase_SF"/>
</dbReference>
<dbReference type="InterPro" id="IPR006352">
    <property type="entry name" value="GlmM_bact"/>
</dbReference>
<dbReference type="InterPro" id="IPR050060">
    <property type="entry name" value="Phosphoglucosamine_mutase"/>
</dbReference>
<dbReference type="NCBIfam" id="TIGR01455">
    <property type="entry name" value="glmM"/>
    <property type="match status" value="1"/>
</dbReference>
<dbReference type="NCBIfam" id="NF008139">
    <property type="entry name" value="PRK10887.1"/>
    <property type="match status" value="1"/>
</dbReference>
<dbReference type="PANTHER" id="PTHR42946:SF1">
    <property type="entry name" value="PHOSPHOGLUCOMUTASE (ALPHA-D-GLUCOSE-1,6-BISPHOSPHATE-DEPENDENT)"/>
    <property type="match status" value="1"/>
</dbReference>
<dbReference type="PANTHER" id="PTHR42946">
    <property type="entry name" value="PHOSPHOHEXOSE MUTASE"/>
    <property type="match status" value="1"/>
</dbReference>
<dbReference type="Pfam" id="PF02878">
    <property type="entry name" value="PGM_PMM_I"/>
    <property type="match status" value="1"/>
</dbReference>
<dbReference type="Pfam" id="PF02879">
    <property type="entry name" value="PGM_PMM_II"/>
    <property type="match status" value="1"/>
</dbReference>
<dbReference type="Pfam" id="PF02880">
    <property type="entry name" value="PGM_PMM_III"/>
    <property type="match status" value="1"/>
</dbReference>
<dbReference type="Pfam" id="PF00408">
    <property type="entry name" value="PGM_PMM_IV"/>
    <property type="match status" value="1"/>
</dbReference>
<dbReference type="PRINTS" id="PR00509">
    <property type="entry name" value="PGMPMM"/>
</dbReference>
<dbReference type="SUPFAM" id="SSF55957">
    <property type="entry name" value="Phosphoglucomutase, C-terminal domain"/>
    <property type="match status" value="1"/>
</dbReference>
<dbReference type="SUPFAM" id="SSF53738">
    <property type="entry name" value="Phosphoglucomutase, first 3 domains"/>
    <property type="match status" value="3"/>
</dbReference>
<dbReference type="PROSITE" id="PS00710">
    <property type="entry name" value="PGM_PMM"/>
    <property type="match status" value="1"/>
</dbReference>
<reference key="1">
    <citation type="journal article" date="2011" name="J. Bacteriol.">
        <title>Complete genome sequence of the plant growth-promoting endophyte Burkholderia phytofirmans strain PsJN.</title>
        <authorList>
            <person name="Weilharter A."/>
            <person name="Mitter B."/>
            <person name="Shin M.V."/>
            <person name="Chain P.S."/>
            <person name="Nowak J."/>
            <person name="Sessitsch A."/>
        </authorList>
    </citation>
    <scope>NUCLEOTIDE SEQUENCE [LARGE SCALE GENOMIC DNA]</scope>
    <source>
        <strain>DSM 17436 / LMG 22146 / PsJN</strain>
    </source>
</reference>
<organism>
    <name type="scientific">Paraburkholderia phytofirmans (strain DSM 17436 / LMG 22146 / PsJN)</name>
    <name type="common">Burkholderia phytofirmans</name>
    <dbReference type="NCBI Taxonomy" id="398527"/>
    <lineage>
        <taxon>Bacteria</taxon>
        <taxon>Pseudomonadati</taxon>
        <taxon>Pseudomonadota</taxon>
        <taxon>Betaproteobacteria</taxon>
        <taxon>Burkholderiales</taxon>
        <taxon>Burkholderiaceae</taxon>
        <taxon>Paraburkholderia</taxon>
    </lineage>
</organism>
<sequence length="452" mass="47782">MARRYFGTDGIRGKVGEGPITPEFVLRLGYAAGKVLAGADRWAKSGTRPTVLIGKDTRVSGYMLEAALESGFSAAGVDVMLAGPMPTPGIAYLTRALRLAAGVVISASHNPYYDNGIKFFSADGNKLPDEVESQIEEQLDLPLACAASEQLGKARRLDDAAGRYIEFCKSTFPAAFDLHGLKLVVDCAHGAAYDVAPHVFHELGAEVIPIGVAPNGFNINDGVGATAPDALVRAVRANHADLGIALDGDADRLQVVDAAGRLYNGDELLYILVKDRVATDGKVDGAVGTLMTNMAVEVALQEAGVKFVRAAVGDRYVLEQLREHGWQLGAEGSGHILSLDRHSTGDGIVSALLVLAAMKRSEKTLADLLDGVTLFPQKLINVRMKPDADWKSSDAIRRAIAKAESALNGRGRVLIRASGTEPVLRVMVEAENAADALQYAESIAGAVKEATA</sequence>
<evidence type="ECO:0000255" key="1">
    <source>
        <dbReference type="HAMAP-Rule" id="MF_01554"/>
    </source>
</evidence>
<gene>
    <name evidence="1" type="primary">glmM</name>
    <name type="ordered locus">Bphyt_2860</name>
</gene>
<keyword id="KW-0413">Isomerase</keyword>
<keyword id="KW-0460">Magnesium</keyword>
<keyword id="KW-0479">Metal-binding</keyword>
<keyword id="KW-0597">Phosphoprotein</keyword>
<feature type="chain" id="PRO_1000201071" description="Phosphoglucosamine mutase">
    <location>
        <begin position="1"/>
        <end position="452"/>
    </location>
</feature>
<feature type="active site" description="Phosphoserine intermediate" evidence="1">
    <location>
        <position position="108"/>
    </location>
</feature>
<feature type="binding site" description="via phosphate group" evidence="1">
    <location>
        <position position="108"/>
    </location>
    <ligand>
        <name>Mg(2+)</name>
        <dbReference type="ChEBI" id="CHEBI:18420"/>
    </ligand>
</feature>
<feature type="binding site" evidence="1">
    <location>
        <position position="247"/>
    </location>
    <ligand>
        <name>Mg(2+)</name>
        <dbReference type="ChEBI" id="CHEBI:18420"/>
    </ligand>
</feature>
<feature type="binding site" evidence="1">
    <location>
        <position position="249"/>
    </location>
    <ligand>
        <name>Mg(2+)</name>
        <dbReference type="ChEBI" id="CHEBI:18420"/>
    </ligand>
</feature>
<feature type="binding site" evidence="1">
    <location>
        <position position="251"/>
    </location>
    <ligand>
        <name>Mg(2+)</name>
        <dbReference type="ChEBI" id="CHEBI:18420"/>
    </ligand>
</feature>
<feature type="modified residue" description="Phosphoserine" evidence="1">
    <location>
        <position position="108"/>
    </location>
</feature>
<comment type="function">
    <text evidence="1">Catalyzes the conversion of glucosamine-6-phosphate to glucosamine-1-phosphate.</text>
</comment>
<comment type="catalytic activity">
    <reaction evidence="1">
        <text>alpha-D-glucosamine 1-phosphate = D-glucosamine 6-phosphate</text>
        <dbReference type="Rhea" id="RHEA:23424"/>
        <dbReference type="ChEBI" id="CHEBI:58516"/>
        <dbReference type="ChEBI" id="CHEBI:58725"/>
        <dbReference type="EC" id="5.4.2.10"/>
    </reaction>
</comment>
<comment type="cofactor">
    <cofactor evidence="1">
        <name>Mg(2+)</name>
        <dbReference type="ChEBI" id="CHEBI:18420"/>
    </cofactor>
    <text evidence="1">Binds 1 Mg(2+) ion per subunit.</text>
</comment>
<comment type="PTM">
    <text evidence="1">Activated by phosphorylation.</text>
</comment>
<comment type="similarity">
    <text evidence="1">Belongs to the phosphohexose mutase family.</text>
</comment>